<evidence type="ECO:0000250" key="1"/>
<evidence type="ECO:0000255" key="2"/>
<evidence type="ECO:0000256" key="3">
    <source>
        <dbReference type="SAM" id="MobiDB-lite"/>
    </source>
</evidence>
<evidence type="ECO:0000305" key="4"/>
<sequence length="196" mass="22547">MVPKRFRKENAGAREVKSEVFGDKKARNQLAHTSKNYDNANEQPRKFKNRVAKPKDNGKPKVKKARVYTEKELGIPKLNTAIDPEGAKKALRGKKGKKFVDNDQMNLLVSIVNEKIDSRNASKLEKARQLEMIREQKRKEIEKREAEKEAEIEQKKKEIKKTSRGKSADKVQKKMEELKKKEEGKGNSKKKSVSFA</sequence>
<comment type="function">
    <text evidence="1">Required for efficient assembly and nuclear export of the 60S ribosomal subunit.</text>
</comment>
<comment type="subunit">
    <text evidence="1">Component of the 66S pre-ribosomal particle.</text>
</comment>
<comment type="subcellular location">
    <subcellularLocation>
        <location evidence="1">Nucleus</location>
        <location evidence="1">Nucleolus</location>
    </subcellularLocation>
</comment>
<comment type="similarity">
    <text evidence="4">Belongs to the LOC1 family.</text>
</comment>
<dbReference type="EMBL" id="CR382130">
    <property type="protein sequence ID" value="CAG81232.1"/>
    <property type="molecule type" value="Genomic_DNA"/>
</dbReference>
<dbReference type="RefSeq" id="XP_503040.1">
    <property type="nucleotide sequence ID" value="XM_503040.1"/>
</dbReference>
<dbReference type="SMR" id="Q6C8H2"/>
<dbReference type="FunCoup" id="Q6C8H2">
    <property type="interactions" value="354"/>
</dbReference>
<dbReference type="STRING" id="284591.Q6C8H2"/>
<dbReference type="EnsemblFungi" id="CAG81232">
    <property type="protein sequence ID" value="CAG81232"/>
    <property type="gene ID" value="YALI0_D19624g"/>
</dbReference>
<dbReference type="KEGG" id="yli:2911179"/>
<dbReference type="VEuPathDB" id="FungiDB:YALI0_D19624g"/>
<dbReference type="HOGENOM" id="CLU_096593_1_0_1"/>
<dbReference type="InParanoid" id="Q6C8H2"/>
<dbReference type="OMA" id="RESMNTI"/>
<dbReference type="OrthoDB" id="124281at4891"/>
<dbReference type="Proteomes" id="UP000001300">
    <property type="component" value="Chromosome D"/>
</dbReference>
<dbReference type="GO" id="GO:0005730">
    <property type="term" value="C:nucleolus"/>
    <property type="evidence" value="ECO:0000318"/>
    <property type="project" value="GO_Central"/>
</dbReference>
<dbReference type="GO" id="GO:0030687">
    <property type="term" value="C:preribosome, large subunit precursor"/>
    <property type="evidence" value="ECO:0000318"/>
    <property type="project" value="GO_Central"/>
</dbReference>
<dbReference type="GO" id="GO:0101031">
    <property type="term" value="C:protein folding chaperone complex"/>
    <property type="evidence" value="ECO:0007669"/>
    <property type="project" value="EnsemblFungi"/>
</dbReference>
<dbReference type="GO" id="GO:0042802">
    <property type="term" value="F:identical protein binding"/>
    <property type="evidence" value="ECO:0007669"/>
    <property type="project" value="EnsemblFungi"/>
</dbReference>
<dbReference type="GO" id="GO:0003729">
    <property type="term" value="F:mRNA binding"/>
    <property type="evidence" value="ECO:0000318"/>
    <property type="project" value="GO_Central"/>
</dbReference>
<dbReference type="GO" id="GO:0043022">
    <property type="term" value="F:ribosome binding"/>
    <property type="evidence" value="ECO:0007669"/>
    <property type="project" value="EnsemblFungi"/>
</dbReference>
<dbReference type="GO" id="GO:0140691">
    <property type="term" value="F:RNA folding chaperone"/>
    <property type="evidence" value="ECO:0007669"/>
    <property type="project" value="EnsemblFungi"/>
</dbReference>
<dbReference type="GO" id="GO:0033592">
    <property type="term" value="F:RNA strand annealing activity"/>
    <property type="evidence" value="ECO:0007669"/>
    <property type="project" value="EnsemblFungi"/>
</dbReference>
<dbReference type="GO" id="GO:0000480">
    <property type="term" value="P:endonucleolytic cleavage in 5'-ETS of tricistronic rRNA transcript (SSU-rRNA, 5.8S rRNA, LSU-rRNA)"/>
    <property type="evidence" value="ECO:0007669"/>
    <property type="project" value="EnsemblFungi"/>
</dbReference>
<dbReference type="GO" id="GO:0000447">
    <property type="term" value="P:endonucleolytic cleavage in ITS1 to separate SSU-rRNA from 5.8S rRNA and LSU-rRNA from tricistronic rRNA transcript (SSU-rRNA, 5.8S rRNA, LSU-rRNA)"/>
    <property type="evidence" value="ECO:0007669"/>
    <property type="project" value="EnsemblFungi"/>
</dbReference>
<dbReference type="GO" id="GO:0000472">
    <property type="term" value="P:endonucleolytic cleavage to generate mature 5'-end of SSU-rRNA from (SSU-rRNA, 5.8S rRNA, LSU-rRNA)"/>
    <property type="evidence" value="ECO:0007669"/>
    <property type="project" value="EnsemblFungi"/>
</dbReference>
<dbReference type="GO" id="GO:0008298">
    <property type="term" value="P:intracellular mRNA localization"/>
    <property type="evidence" value="ECO:0000318"/>
    <property type="project" value="GO_Central"/>
</dbReference>
<dbReference type="GO" id="GO:0051028">
    <property type="term" value="P:mRNA transport"/>
    <property type="evidence" value="ECO:0007669"/>
    <property type="project" value="UniProtKB-KW"/>
</dbReference>
<dbReference type="GO" id="GO:0017148">
    <property type="term" value="P:negative regulation of translation"/>
    <property type="evidence" value="ECO:0007669"/>
    <property type="project" value="EnsemblFungi"/>
</dbReference>
<dbReference type="GO" id="GO:0042273">
    <property type="term" value="P:ribosomal large subunit biogenesis"/>
    <property type="evidence" value="ECO:0000318"/>
    <property type="project" value="GO_Central"/>
</dbReference>
<dbReference type="GO" id="GO:0000055">
    <property type="term" value="P:ribosomal large subunit export from nucleus"/>
    <property type="evidence" value="ECO:0007669"/>
    <property type="project" value="EnsemblFungi"/>
</dbReference>
<dbReference type="InterPro" id="IPR037650">
    <property type="entry name" value="Loc1"/>
</dbReference>
<dbReference type="PANTHER" id="PTHR28028">
    <property type="entry name" value="60S RIBOSOMAL SUBUNIT ASSEMBLY/EXPORT PROTEIN LOC1"/>
    <property type="match status" value="1"/>
</dbReference>
<dbReference type="PANTHER" id="PTHR28028:SF1">
    <property type="entry name" value="60S RIBOSOMAL SUBUNIT ASSEMBLY_EXPORT PROTEIN LOC1"/>
    <property type="match status" value="1"/>
</dbReference>
<proteinExistence type="inferred from homology"/>
<feature type="chain" id="PRO_0000308804" description="60S ribosomal subunit assembly/export protein LOC1">
    <location>
        <begin position="1"/>
        <end position="196"/>
    </location>
</feature>
<feature type="region of interest" description="Disordered" evidence="3">
    <location>
        <begin position="1"/>
        <end position="65"/>
    </location>
</feature>
<feature type="region of interest" description="Disordered" evidence="3">
    <location>
        <begin position="140"/>
        <end position="196"/>
    </location>
</feature>
<feature type="coiled-coil region" evidence="2">
    <location>
        <begin position="121"/>
        <end position="167"/>
    </location>
</feature>
<feature type="compositionally biased region" description="Basic and acidic residues" evidence="3">
    <location>
        <begin position="8"/>
        <end position="26"/>
    </location>
</feature>
<feature type="compositionally biased region" description="Polar residues" evidence="3">
    <location>
        <begin position="30"/>
        <end position="42"/>
    </location>
</feature>
<feature type="compositionally biased region" description="Basic and acidic residues" evidence="3">
    <location>
        <begin position="140"/>
        <end position="156"/>
    </location>
</feature>
<feature type="compositionally biased region" description="Basic and acidic residues" evidence="3">
    <location>
        <begin position="166"/>
        <end position="186"/>
    </location>
</feature>
<feature type="compositionally biased region" description="Basic residues" evidence="3">
    <location>
        <begin position="187"/>
        <end position="196"/>
    </location>
</feature>
<accession>Q6C8H2</accession>
<gene>
    <name type="primary">LOC1</name>
    <name type="ordered locus">YALI0D19624g</name>
</gene>
<name>LOC1_YARLI</name>
<keyword id="KW-0175">Coiled coil</keyword>
<keyword id="KW-0509">mRNA transport</keyword>
<keyword id="KW-0539">Nucleus</keyword>
<keyword id="KW-1185">Reference proteome</keyword>
<keyword id="KW-0690">Ribosome biogenesis</keyword>
<keyword id="KW-0813">Transport</keyword>
<protein>
    <recommendedName>
        <fullName>60S ribosomal subunit assembly/export protein LOC1</fullName>
    </recommendedName>
</protein>
<organism>
    <name type="scientific">Yarrowia lipolytica (strain CLIB 122 / E 150)</name>
    <name type="common">Yeast</name>
    <name type="synonym">Candida lipolytica</name>
    <dbReference type="NCBI Taxonomy" id="284591"/>
    <lineage>
        <taxon>Eukaryota</taxon>
        <taxon>Fungi</taxon>
        <taxon>Dikarya</taxon>
        <taxon>Ascomycota</taxon>
        <taxon>Saccharomycotina</taxon>
        <taxon>Dipodascomycetes</taxon>
        <taxon>Dipodascales</taxon>
        <taxon>Dipodascales incertae sedis</taxon>
        <taxon>Yarrowia</taxon>
    </lineage>
</organism>
<reference key="1">
    <citation type="journal article" date="2004" name="Nature">
        <title>Genome evolution in yeasts.</title>
        <authorList>
            <person name="Dujon B."/>
            <person name="Sherman D."/>
            <person name="Fischer G."/>
            <person name="Durrens P."/>
            <person name="Casaregola S."/>
            <person name="Lafontaine I."/>
            <person name="de Montigny J."/>
            <person name="Marck C."/>
            <person name="Neuveglise C."/>
            <person name="Talla E."/>
            <person name="Goffard N."/>
            <person name="Frangeul L."/>
            <person name="Aigle M."/>
            <person name="Anthouard V."/>
            <person name="Babour A."/>
            <person name="Barbe V."/>
            <person name="Barnay S."/>
            <person name="Blanchin S."/>
            <person name="Beckerich J.-M."/>
            <person name="Beyne E."/>
            <person name="Bleykasten C."/>
            <person name="Boisrame A."/>
            <person name="Boyer J."/>
            <person name="Cattolico L."/>
            <person name="Confanioleri F."/>
            <person name="de Daruvar A."/>
            <person name="Despons L."/>
            <person name="Fabre E."/>
            <person name="Fairhead C."/>
            <person name="Ferry-Dumazet H."/>
            <person name="Groppi A."/>
            <person name="Hantraye F."/>
            <person name="Hennequin C."/>
            <person name="Jauniaux N."/>
            <person name="Joyet P."/>
            <person name="Kachouri R."/>
            <person name="Kerrest A."/>
            <person name="Koszul R."/>
            <person name="Lemaire M."/>
            <person name="Lesur I."/>
            <person name="Ma L."/>
            <person name="Muller H."/>
            <person name="Nicaud J.-M."/>
            <person name="Nikolski M."/>
            <person name="Oztas S."/>
            <person name="Ozier-Kalogeropoulos O."/>
            <person name="Pellenz S."/>
            <person name="Potier S."/>
            <person name="Richard G.-F."/>
            <person name="Straub M.-L."/>
            <person name="Suleau A."/>
            <person name="Swennen D."/>
            <person name="Tekaia F."/>
            <person name="Wesolowski-Louvel M."/>
            <person name="Westhof E."/>
            <person name="Wirth B."/>
            <person name="Zeniou-Meyer M."/>
            <person name="Zivanovic Y."/>
            <person name="Bolotin-Fukuhara M."/>
            <person name="Thierry A."/>
            <person name="Bouchier C."/>
            <person name="Caudron B."/>
            <person name="Scarpelli C."/>
            <person name="Gaillardin C."/>
            <person name="Weissenbach J."/>
            <person name="Wincker P."/>
            <person name="Souciet J.-L."/>
        </authorList>
    </citation>
    <scope>NUCLEOTIDE SEQUENCE [LARGE SCALE GENOMIC DNA]</scope>
    <source>
        <strain>CLIB 122 / E 150</strain>
    </source>
</reference>